<accession>A6TR79</accession>
<proteinExistence type="inferred from homology"/>
<name>MUTS_ALKMQ</name>
<organism>
    <name type="scientific">Alkaliphilus metalliredigens (strain QYMF)</name>
    <dbReference type="NCBI Taxonomy" id="293826"/>
    <lineage>
        <taxon>Bacteria</taxon>
        <taxon>Bacillati</taxon>
        <taxon>Bacillota</taxon>
        <taxon>Clostridia</taxon>
        <taxon>Peptostreptococcales</taxon>
        <taxon>Natronincolaceae</taxon>
        <taxon>Alkaliphilus</taxon>
    </lineage>
</organism>
<reference key="1">
    <citation type="journal article" date="2016" name="Genome Announc.">
        <title>Complete genome sequence of Alkaliphilus metalliredigens strain QYMF, an alkaliphilic and metal-reducing bacterium isolated from borax-contaminated leachate ponds.</title>
        <authorList>
            <person name="Hwang C."/>
            <person name="Copeland A."/>
            <person name="Lucas S."/>
            <person name="Lapidus A."/>
            <person name="Barry K."/>
            <person name="Detter J.C."/>
            <person name="Glavina Del Rio T."/>
            <person name="Hammon N."/>
            <person name="Israni S."/>
            <person name="Dalin E."/>
            <person name="Tice H."/>
            <person name="Pitluck S."/>
            <person name="Chertkov O."/>
            <person name="Brettin T."/>
            <person name="Bruce D."/>
            <person name="Han C."/>
            <person name="Schmutz J."/>
            <person name="Larimer F."/>
            <person name="Land M.L."/>
            <person name="Hauser L."/>
            <person name="Kyrpides N."/>
            <person name="Mikhailova N."/>
            <person name="Ye Q."/>
            <person name="Zhou J."/>
            <person name="Richardson P."/>
            <person name="Fields M.W."/>
        </authorList>
    </citation>
    <scope>NUCLEOTIDE SEQUENCE [LARGE SCALE GENOMIC DNA]</scope>
    <source>
        <strain>QYMF</strain>
    </source>
</reference>
<feature type="chain" id="PRO_1000071270" description="DNA mismatch repair protein MutS">
    <location>
        <begin position="1"/>
        <end position="880"/>
    </location>
</feature>
<feature type="binding site" evidence="1">
    <location>
        <begin position="624"/>
        <end position="631"/>
    </location>
    <ligand>
        <name>ATP</name>
        <dbReference type="ChEBI" id="CHEBI:30616"/>
    </ligand>
</feature>
<sequence length="880" mass="99555">MANLTPMMQQYFDIKKQYPDSLLFFRMGDFYELFFQDAETASRELEITLTGRSCGLEERAPMCGVPHHAATGYIDRLVSNGYKVAICEQIEDVSQAKGIVKRDVVRVITPGTLIDTQLLDDKKNNYLMSVFGSRTGFGLAYVDISTGDLFATEIKENIHPQMLIDEMGRVLPQELLYFIETDKEDPTIISMIKKRFDFYTNGYEEWSYEDTFALNQIKDHFNVVSLEGLGFHPSHLGINAAGALFHYLKTTQKRALEHINHINVYSIHEKMTLDINTRKNLELTETIRSKSKKGSLLGVLDKTSTAMGGRMLRKWIEAPLIDPVIINKRLEAVQLLKEQIELRQELKESLKKIYDLERLAGKISYGSVTPRDLIALKNSLSYLPSIINGLEKIQGETFQSLVQSIDPLDEVHSLVELSILEDAPLSSKDGGIIQEGYHKEVDELKNASTEGRQWIAQLEQKERVNSGIKSLKIKYNKIFGYYIEITKSNLSMVPTEYIRKQTLANCERYVTPELKEIESKILGAEEKVILLEYHLFIEVREKIAHEITRIQQTARAIAELDVLYSFAEIAAENNFIKPHINTSNEIKIVEGRHPVVELTFNKESFVPNDTYMDNRDCSMSIITGPNMAGKSTYMRQVALIVLMAQIGSFVPASEASIGIVDRIFTRIGASDDLAQGHSTFMVEMSEMANILNNATANSLVILDEIGRGTSTFDGLSIAWAVIEYMQQYKKSKTLFSTHYHELTELEGKIQGVKNYNILVEEDGEEIVFLRKVVSGSTSKSYGIQVAKLAGLPLNTLIRAQEILSDLEKKNNEIKIPAEEEIALSRESEGNSRDTNGIQLDLTSFSYNEIIEDIRSLNLLETTPMTAMNLLYQLQKRISSL</sequence>
<comment type="function">
    <text evidence="1">This protein is involved in the repair of mismatches in DNA. It is possible that it carries out the mismatch recognition step. This protein has a weak ATPase activity.</text>
</comment>
<comment type="similarity">
    <text evidence="1">Belongs to the DNA mismatch repair MutS family.</text>
</comment>
<dbReference type="EMBL" id="CP000724">
    <property type="protein sequence ID" value="ABR48697.1"/>
    <property type="molecule type" value="Genomic_DNA"/>
</dbReference>
<dbReference type="RefSeq" id="WP_012063671.1">
    <property type="nucleotide sequence ID" value="NC_009633.1"/>
</dbReference>
<dbReference type="SMR" id="A6TR79"/>
<dbReference type="STRING" id="293826.Amet_2544"/>
<dbReference type="KEGG" id="amt:Amet_2544"/>
<dbReference type="eggNOG" id="COG0249">
    <property type="taxonomic scope" value="Bacteria"/>
</dbReference>
<dbReference type="HOGENOM" id="CLU_002472_4_0_9"/>
<dbReference type="OrthoDB" id="9802448at2"/>
<dbReference type="Proteomes" id="UP000001572">
    <property type="component" value="Chromosome"/>
</dbReference>
<dbReference type="GO" id="GO:0005829">
    <property type="term" value="C:cytosol"/>
    <property type="evidence" value="ECO:0007669"/>
    <property type="project" value="TreeGrafter"/>
</dbReference>
<dbReference type="GO" id="GO:0005524">
    <property type="term" value="F:ATP binding"/>
    <property type="evidence" value="ECO:0007669"/>
    <property type="project" value="UniProtKB-UniRule"/>
</dbReference>
<dbReference type="GO" id="GO:0140664">
    <property type="term" value="F:ATP-dependent DNA damage sensor activity"/>
    <property type="evidence" value="ECO:0007669"/>
    <property type="project" value="InterPro"/>
</dbReference>
<dbReference type="GO" id="GO:0003684">
    <property type="term" value="F:damaged DNA binding"/>
    <property type="evidence" value="ECO:0007669"/>
    <property type="project" value="UniProtKB-UniRule"/>
</dbReference>
<dbReference type="GO" id="GO:0030983">
    <property type="term" value="F:mismatched DNA binding"/>
    <property type="evidence" value="ECO:0007669"/>
    <property type="project" value="InterPro"/>
</dbReference>
<dbReference type="GO" id="GO:0006298">
    <property type="term" value="P:mismatch repair"/>
    <property type="evidence" value="ECO:0007669"/>
    <property type="project" value="UniProtKB-UniRule"/>
</dbReference>
<dbReference type="CDD" id="cd03284">
    <property type="entry name" value="ABC_MutS1"/>
    <property type="match status" value="1"/>
</dbReference>
<dbReference type="FunFam" id="1.10.1420.10:FF:000001">
    <property type="entry name" value="DNA mismatch repair protein MutS"/>
    <property type="match status" value="1"/>
</dbReference>
<dbReference type="FunFam" id="3.40.1170.10:FF:000001">
    <property type="entry name" value="DNA mismatch repair protein MutS"/>
    <property type="match status" value="1"/>
</dbReference>
<dbReference type="FunFam" id="3.40.50.300:FF:000870">
    <property type="entry name" value="MutS protein homolog 4"/>
    <property type="match status" value="1"/>
</dbReference>
<dbReference type="Gene3D" id="1.10.1420.10">
    <property type="match status" value="2"/>
</dbReference>
<dbReference type="Gene3D" id="3.40.1170.10">
    <property type="entry name" value="DNA repair protein MutS, domain I"/>
    <property type="match status" value="1"/>
</dbReference>
<dbReference type="Gene3D" id="3.30.420.110">
    <property type="entry name" value="MutS, connector domain"/>
    <property type="match status" value="1"/>
</dbReference>
<dbReference type="Gene3D" id="3.40.50.300">
    <property type="entry name" value="P-loop containing nucleotide triphosphate hydrolases"/>
    <property type="match status" value="1"/>
</dbReference>
<dbReference type="HAMAP" id="MF_00096">
    <property type="entry name" value="MutS"/>
    <property type="match status" value="1"/>
</dbReference>
<dbReference type="InterPro" id="IPR005748">
    <property type="entry name" value="DNA_mismatch_repair_MutS"/>
</dbReference>
<dbReference type="InterPro" id="IPR007695">
    <property type="entry name" value="DNA_mismatch_repair_MutS-lik_N"/>
</dbReference>
<dbReference type="InterPro" id="IPR017261">
    <property type="entry name" value="DNA_mismatch_repair_MutS/MSH"/>
</dbReference>
<dbReference type="InterPro" id="IPR000432">
    <property type="entry name" value="DNA_mismatch_repair_MutS_C"/>
</dbReference>
<dbReference type="InterPro" id="IPR007861">
    <property type="entry name" value="DNA_mismatch_repair_MutS_clamp"/>
</dbReference>
<dbReference type="InterPro" id="IPR007696">
    <property type="entry name" value="DNA_mismatch_repair_MutS_core"/>
</dbReference>
<dbReference type="InterPro" id="IPR016151">
    <property type="entry name" value="DNA_mismatch_repair_MutS_N"/>
</dbReference>
<dbReference type="InterPro" id="IPR036187">
    <property type="entry name" value="DNA_mismatch_repair_MutS_sf"/>
</dbReference>
<dbReference type="InterPro" id="IPR007860">
    <property type="entry name" value="DNA_mmatch_repair_MutS_con_dom"/>
</dbReference>
<dbReference type="InterPro" id="IPR045076">
    <property type="entry name" value="MutS"/>
</dbReference>
<dbReference type="InterPro" id="IPR036678">
    <property type="entry name" value="MutS_con_dom_sf"/>
</dbReference>
<dbReference type="InterPro" id="IPR027417">
    <property type="entry name" value="P-loop_NTPase"/>
</dbReference>
<dbReference type="NCBIfam" id="TIGR01070">
    <property type="entry name" value="mutS1"/>
    <property type="match status" value="1"/>
</dbReference>
<dbReference type="NCBIfam" id="NF003810">
    <property type="entry name" value="PRK05399.1"/>
    <property type="match status" value="1"/>
</dbReference>
<dbReference type="PANTHER" id="PTHR11361:SF34">
    <property type="entry name" value="DNA MISMATCH REPAIR PROTEIN MSH1, MITOCHONDRIAL"/>
    <property type="match status" value="1"/>
</dbReference>
<dbReference type="PANTHER" id="PTHR11361">
    <property type="entry name" value="DNA MISMATCH REPAIR PROTEIN MUTS FAMILY MEMBER"/>
    <property type="match status" value="1"/>
</dbReference>
<dbReference type="Pfam" id="PF01624">
    <property type="entry name" value="MutS_I"/>
    <property type="match status" value="1"/>
</dbReference>
<dbReference type="Pfam" id="PF05188">
    <property type="entry name" value="MutS_II"/>
    <property type="match status" value="1"/>
</dbReference>
<dbReference type="Pfam" id="PF05192">
    <property type="entry name" value="MutS_III"/>
    <property type="match status" value="1"/>
</dbReference>
<dbReference type="Pfam" id="PF05190">
    <property type="entry name" value="MutS_IV"/>
    <property type="match status" value="1"/>
</dbReference>
<dbReference type="Pfam" id="PF00488">
    <property type="entry name" value="MutS_V"/>
    <property type="match status" value="1"/>
</dbReference>
<dbReference type="PIRSF" id="PIRSF037677">
    <property type="entry name" value="DNA_mis_repair_Msh6"/>
    <property type="match status" value="1"/>
</dbReference>
<dbReference type="SMART" id="SM00534">
    <property type="entry name" value="MUTSac"/>
    <property type="match status" value="1"/>
</dbReference>
<dbReference type="SMART" id="SM00533">
    <property type="entry name" value="MUTSd"/>
    <property type="match status" value="1"/>
</dbReference>
<dbReference type="SUPFAM" id="SSF55271">
    <property type="entry name" value="DNA repair protein MutS, domain I"/>
    <property type="match status" value="1"/>
</dbReference>
<dbReference type="SUPFAM" id="SSF53150">
    <property type="entry name" value="DNA repair protein MutS, domain II"/>
    <property type="match status" value="1"/>
</dbReference>
<dbReference type="SUPFAM" id="SSF48334">
    <property type="entry name" value="DNA repair protein MutS, domain III"/>
    <property type="match status" value="1"/>
</dbReference>
<dbReference type="SUPFAM" id="SSF52540">
    <property type="entry name" value="P-loop containing nucleoside triphosphate hydrolases"/>
    <property type="match status" value="1"/>
</dbReference>
<dbReference type="PROSITE" id="PS00486">
    <property type="entry name" value="DNA_MISMATCH_REPAIR_2"/>
    <property type="match status" value="1"/>
</dbReference>
<evidence type="ECO:0000255" key="1">
    <source>
        <dbReference type="HAMAP-Rule" id="MF_00096"/>
    </source>
</evidence>
<gene>
    <name evidence="1" type="primary">mutS</name>
    <name type="ordered locus">Amet_2544</name>
</gene>
<protein>
    <recommendedName>
        <fullName evidence="1">DNA mismatch repair protein MutS</fullName>
    </recommendedName>
</protein>
<keyword id="KW-0067">ATP-binding</keyword>
<keyword id="KW-0227">DNA damage</keyword>
<keyword id="KW-0234">DNA repair</keyword>
<keyword id="KW-0238">DNA-binding</keyword>
<keyword id="KW-0547">Nucleotide-binding</keyword>
<keyword id="KW-1185">Reference proteome</keyword>